<dbReference type="EC" id="4.1.1.49" evidence="1"/>
<dbReference type="EMBL" id="CP000444">
    <property type="protein sequence ID" value="ABI41153.1"/>
    <property type="molecule type" value="Genomic_DNA"/>
</dbReference>
<dbReference type="SMR" id="Q0I0F2"/>
<dbReference type="KEGG" id="shm:Shewmr7_0147"/>
<dbReference type="HOGENOM" id="CLU_018247_0_1_6"/>
<dbReference type="UniPathway" id="UPA00138"/>
<dbReference type="GO" id="GO:0005829">
    <property type="term" value="C:cytosol"/>
    <property type="evidence" value="ECO:0007669"/>
    <property type="project" value="TreeGrafter"/>
</dbReference>
<dbReference type="GO" id="GO:0005524">
    <property type="term" value="F:ATP binding"/>
    <property type="evidence" value="ECO:0007669"/>
    <property type="project" value="UniProtKB-UniRule"/>
</dbReference>
<dbReference type="GO" id="GO:0046872">
    <property type="term" value="F:metal ion binding"/>
    <property type="evidence" value="ECO:0007669"/>
    <property type="project" value="UniProtKB-KW"/>
</dbReference>
<dbReference type="GO" id="GO:0004612">
    <property type="term" value="F:phosphoenolpyruvate carboxykinase (ATP) activity"/>
    <property type="evidence" value="ECO:0007669"/>
    <property type="project" value="UniProtKB-UniRule"/>
</dbReference>
<dbReference type="GO" id="GO:0006094">
    <property type="term" value="P:gluconeogenesis"/>
    <property type="evidence" value="ECO:0007669"/>
    <property type="project" value="UniProtKB-UniRule"/>
</dbReference>
<dbReference type="CDD" id="cd00484">
    <property type="entry name" value="PEPCK_ATP"/>
    <property type="match status" value="1"/>
</dbReference>
<dbReference type="FunFam" id="2.170.8.10:FF:000001">
    <property type="entry name" value="Phosphoenolpyruvate carboxykinase (ATP)"/>
    <property type="match status" value="1"/>
</dbReference>
<dbReference type="Gene3D" id="3.90.228.20">
    <property type="match status" value="1"/>
</dbReference>
<dbReference type="Gene3D" id="3.40.449.10">
    <property type="entry name" value="Phosphoenolpyruvate Carboxykinase, domain 1"/>
    <property type="match status" value="1"/>
</dbReference>
<dbReference type="Gene3D" id="2.170.8.10">
    <property type="entry name" value="Phosphoenolpyruvate Carboxykinase, domain 2"/>
    <property type="match status" value="1"/>
</dbReference>
<dbReference type="HAMAP" id="MF_00453">
    <property type="entry name" value="PEPCK_ATP"/>
    <property type="match status" value="1"/>
</dbReference>
<dbReference type="InterPro" id="IPR001272">
    <property type="entry name" value="PEP_carboxykinase_ATP"/>
</dbReference>
<dbReference type="InterPro" id="IPR013035">
    <property type="entry name" value="PEP_carboxykinase_C"/>
</dbReference>
<dbReference type="InterPro" id="IPR008210">
    <property type="entry name" value="PEP_carboxykinase_N"/>
</dbReference>
<dbReference type="InterPro" id="IPR015994">
    <property type="entry name" value="PEPCK_ATP_CS"/>
</dbReference>
<dbReference type="NCBIfam" id="TIGR00224">
    <property type="entry name" value="pckA"/>
    <property type="match status" value="1"/>
</dbReference>
<dbReference type="NCBIfam" id="NF006820">
    <property type="entry name" value="PRK09344.1-2"/>
    <property type="match status" value="1"/>
</dbReference>
<dbReference type="NCBIfam" id="NF006821">
    <property type="entry name" value="PRK09344.1-3"/>
    <property type="match status" value="1"/>
</dbReference>
<dbReference type="NCBIfam" id="NF006823">
    <property type="entry name" value="PRK09344.1-5"/>
    <property type="match status" value="1"/>
</dbReference>
<dbReference type="PANTHER" id="PTHR30031:SF0">
    <property type="entry name" value="PHOSPHOENOLPYRUVATE CARBOXYKINASE (ATP)"/>
    <property type="match status" value="1"/>
</dbReference>
<dbReference type="PANTHER" id="PTHR30031">
    <property type="entry name" value="PHOSPHOENOLPYRUVATE CARBOXYKINASE ATP"/>
    <property type="match status" value="1"/>
</dbReference>
<dbReference type="Pfam" id="PF01293">
    <property type="entry name" value="PEPCK_ATP"/>
    <property type="match status" value="1"/>
</dbReference>
<dbReference type="PIRSF" id="PIRSF006294">
    <property type="entry name" value="PEP_crbxkin"/>
    <property type="match status" value="1"/>
</dbReference>
<dbReference type="SUPFAM" id="SSF68923">
    <property type="entry name" value="PEP carboxykinase N-terminal domain"/>
    <property type="match status" value="1"/>
</dbReference>
<dbReference type="SUPFAM" id="SSF53795">
    <property type="entry name" value="PEP carboxykinase-like"/>
    <property type="match status" value="1"/>
</dbReference>
<dbReference type="PROSITE" id="PS00532">
    <property type="entry name" value="PEPCK_ATP"/>
    <property type="match status" value="1"/>
</dbReference>
<organism>
    <name type="scientific">Shewanella sp. (strain MR-7)</name>
    <dbReference type="NCBI Taxonomy" id="60481"/>
    <lineage>
        <taxon>Bacteria</taxon>
        <taxon>Pseudomonadati</taxon>
        <taxon>Pseudomonadota</taxon>
        <taxon>Gammaproteobacteria</taxon>
        <taxon>Alteromonadales</taxon>
        <taxon>Shewanellaceae</taxon>
        <taxon>Shewanella</taxon>
    </lineage>
</organism>
<name>PCKA_SHESR</name>
<gene>
    <name evidence="1" type="primary">pckA</name>
    <name type="ordered locus">Shewmr7_0147</name>
</gene>
<accession>Q0I0F2</accession>
<protein>
    <recommendedName>
        <fullName evidence="1">Phosphoenolpyruvate carboxykinase (ATP)</fullName>
        <shortName evidence="1">PCK</shortName>
        <shortName evidence="1">PEP carboxykinase</shortName>
        <shortName evidence="1">PEPCK</shortName>
        <ecNumber evidence="1">4.1.1.49</ecNumber>
    </recommendedName>
</protein>
<sequence length="513" mass="55951">MADGLNRVHYNPSTAQLVEFALLRGEGELTANGALVAKTGTRTGRSPGDRFIVKEPSSAADIEWGPVNQAFEPGAFEGLWARVEAFLADKELFVSDLEVGADPEHYQPVRVTTQYAWHQLFARNLFIIPEEFNRQDKPVWEIINAPDFVCVPERDGTNSDAAVILNFAERKVLLAGLKYAGEMKKSMFSVQNFLLPAQGVLPMHCSANVGKDGDTTLFFGLSGTGKTTLSADPKRFLIGDDEHGWAPGGVFNIEGGCYAKCIDLSQKNEPVIWDAIRFGTVLENVVMDEHRVPNYKDSSLTENTRAAYPLEHIAQRKEDNRGAEPHAVVFLTCDVSGVLPPVSILSKEQAAYHFLSGYTAKVGSTEIGSTSAIQSTFSTCFGAPFFPRPAGVYAELLMKRIESFGSQVYLVNTGWTGGPHGIGKRFDIPTTRAIVDAIVSGELKNVETVHLDTLNLAVPVAVPGVDTNLLNPVNTWSDKALYAEYAQKLAEAFTKNFAKYQVSDAIRNAGPKA</sequence>
<feature type="chain" id="PRO_1000026358" description="Phosphoenolpyruvate carboxykinase (ATP)">
    <location>
        <begin position="1"/>
        <end position="513"/>
    </location>
</feature>
<feature type="binding site" evidence="1">
    <location>
        <position position="45"/>
    </location>
    <ligand>
        <name>substrate</name>
    </ligand>
</feature>
<feature type="binding site" evidence="1">
    <location>
        <position position="179"/>
    </location>
    <ligand>
        <name>substrate</name>
    </ligand>
</feature>
<feature type="binding site" evidence="1">
    <location>
        <position position="185"/>
    </location>
    <ligand>
        <name>ATP</name>
        <dbReference type="ChEBI" id="CHEBI:30616"/>
    </ligand>
</feature>
<feature type="binding site" evidence="1">
    <location>
        <position position="185"/>
    </location>
    <ligand>
        <name>Mn(2+)</name>
        <dbReference type="ChEBI" id="CHEBI:29035"/>
    </ligand>
</feature>
<feature type="binding site" evidence="1">
    <location>
        <position position="185"/>
    </location>
    <ligand>
        <name>substrate</name>
    </ligand>
</feature>
<feature type="binding site" evidence="1">
    <location>
        <position position="204"/>
    </location>
    <ligand>
        <name>ATP</name>
        <dbReference type="ChEBI" id="CHEBI:30616"/>
    </ligand>
</feature>
<feature type="binding site" evidence="1">
    <location>
        <position position="204"/>
    </location>
    <ligand>
        <name>Mn(2+)</name>
        <dbReference type="ChEBI" id="CHEBI:29035"/>
    </ligand>
</feature>
<feature type="binding site" evidence="1">
    <location>
        <begin position="220"/>
        <end position="228"/>
    </location>
    <ligand>
        <name>ATP</name>
        <dbReference type="ChEBI" id="CHEBI:30616"/>
    </ligand>
</feature>
<feature type="binding site" evidence="1">
    <location>
        <position position="241"/>
    </location>
    <ligand>
        <name>Mn(2+)</name>
        <dbReference type="ChEBI" id="CHEBI:29035"/>
    </ligand>
</feature>
<feature type="binding site" evidence="1">
    <location>
        <position position="269"/>
    </location>
    <ligand>
        <name>ATP</name>
        <dbReference type="ChEBI" id="CHEBI:30616"/>
    </ligand>
</feature>
<feature type="binding site" evidence="1">
    <location>
        <position position="305"/>
    </location>
    <ligand>
        <name>ATP</name>
        <dbReference type="ChEBI" id="CHEBI:30616"/>
    </ligand>
</feature>
<feature type="binding site" evidence="1">
    <location>
        <position position="305"/>
    </location>
    <ligand>
        <name>substrate</name>
    </ligand>
</feature>
<feature type="binding site" evidence="1">
    <location>
        <position position="431"/>
    </location>
    <ligand>
        <name>ATP</name>
        <dbReference type="ChEBI" id="CHEBI:30616"/>
    </ligand>
</feature>
<evidence type="ECO:0000255" key="1">
    <source>
        <dbReference type="HAMAP-Rule" id="MF_00453"/>
    </source>
</evidence>
<proteinExistence type="inferred from homology"/>
<reference key="1">
    <citation type="submission" date="2006-08" db="EMBL/GenBank/DDBJ databases">
        <title>Complete sequence of chromosome 1 of Shewanella sp. MR-7.</title>
        <authorList>
            <person name="Copeland A."/>
            <person name="Lucas S."/>
            <person name="Lapidus A."/>
            <person name="Barry K."/>
            <person name="Detter J.C."/>
            <person name="Glavina del Rio T."/>
            <person name="Hammon N."/>
            <person name="Israni S."/>
            <person name="Dalin E."/>
            <person name="Tice H."/>
            <person name="Pitluck S."/>
            <person name="Kiss H."/>
            <person name="Brettin T."/>
            <person name="Bruce D."/>
            <person name="Han C."/>
            <person name="Tapia R."/>
            <person name="Gilna P."/>
            <person name="Schmutz J."/>
            <person name="Larimer F."/>
            <person name="Land M."/>
            <person name="Hauser L."/>
            <person name="Kyrpides N."/>
            <person name="Mikhailova N."/>
            <person name="Nealson K."/>
            <person name="Konstantinidis K."/>
            <person name="Klappenbach J."/>
            <person name="Tiedje J."/>
            <person name="Richardson P."/>
        </authorList>
    </citation>
    <scope>NUCLEOTIDE SEQUENCE [LARGE SCALE GENOMIC DNA]</scope>
    <source>
        <strain>MR-7</strain>
    </source>
</reference>
<keyword id="KW-0067">ATP-binding</keyword>
<keyword id="KW-0963">Cytoplasm</keyword>
<keyword id="KW-0210">Decarboxylase</keyword>
<keyword id="KW-0312">Gluconeogenesis</keyword>
<keyword id="KW-0456">Lyase</keyword>
<keyword id="KW-0464">Manganese</keyword>
<keyword id="KW-0479">Metal-binding</keyword>
<keyword id="KW-0547">Nucleotide-binding</keyword>
<comment type="function">
    <text evidence="1">Involved in the gluconeogenesis. Catalyzes the conversion of oxaloacetate (OAA) to phosphoenolpyruvate (PEP) through direct phosphoryl transfer between the nucleoside triphosphate and OAA.</text>
</comment>
<comment type="catalytic activity">
    <reaction evidence="1">
        <text>oxaloacetate + ATP = phosphoenolpyruvate + ADP + CO2</text>
        <dbReference type="Rhea" id="RHEA:18617"/>
        <dbReference type="ChEBI" id="CHEBI:16452"/>
        <dbReference type="ChEBI" id="CHEBI:16526"/>
        <dbReference type="ChEBI" id="CHEBI:30616"/>
        <dbReference type="ChEBI" id="CHEBI:58702"/>
        <dbReference type="ChEBI" id="CHEBI:456216"/>
        <dbReference type="EC" id="4.1.1.49"/>
    </reaction>
</comment>
<comment type="cofactor">
    <cofactor evidence="1">
        <name>Mn(2+)</name>
        <dbReference type="ChEBI" id="CHEBI:29035"/>
    </cofactor>
    <text evidence="1">Binds 1 Mn(2+) ion per subunit.</text>
</comment>
<comment type="pathway">
    <text evidence="1">Carbohydrate biosynthesis; gluconeogenesis.</text>
</comment>
<comment type="subunit">
    <text evidence="1">Monomer.</text>
</comment>
<comment type="subcellular location">
    <subcellularLocation>
        <location evidence="1">Cytoplasm</location>
    </subcellularLocation>
</comment>
<comment type="similarity">
    <text evidence="1">Belongs to the phosphoenolpyruvate carboxykinase (ATP) family.</text>
</comment>